<reference key="1">
    <citation type="journal article" date="1996" name="DNA Res.">
        <title>Sequence analysis of the genome of the unicellular cyanobacterium Synechocystis sp. strain PCC6803. II. Sequence determination of the entire genome and assignment of potential protein-coding regions.</title>
        <authorList>
            <person name="Kaneko T."/>
            <person name="Sato S."/>
            <person name="Kotani H."/>
            <person name="Tanaka A."/>
            <person name="Asamizu E."/>
            <person name="Nakamura Y."/>
            <person name="Miyajima N."/>
            <person name="Hirosawa M."/>
            <person name="Sugiura M."/>
            <person name="Sasamoto S."/>
            <person name="Kimura T."/>
            <person name="Hosouchi T."/>
            <person name="Matsuno A."/>
            <person name="Muraki A."/>
            <person name="Nakazaki N."/>
            <person name="Naruo K."/>
            <person name="Okumura S."/>
            <person name="Shimpo S."/>
            <person name="Takeuchi C."/>
            <person name="Wada T."/>
            <person name="Watanabe A."/>
            <person name="Yamada M."/>
            <person name="Yasuda M."/>
            <person name="Tabata S."/>
        </authorList>
    </citation>
    <scope>NUCLEOTIDE SEQUENCE [LARGE SCALE GENOMIC DNA]</scope>
    <source>
        <strain>ATCC 27184 / PCC 6803 / Kazusa</strain>
    </source>
</reference>
<feature type="chain" id="PRO_0000134594" description="Orotidine 5'-phosphate decarboxylase">
    <location>
        <begin position="1"/>
        <end position="231"/>
    </location>
</feature>
<feature type="active site" description="Proton donor" evidence="1">
    <location>
        <position position="61"/>
    </location>
</feature>
<feature type="binding site" evidence="1">
    <location>
        <position position="11"/>
    </location>
    <ligand>
        <name>substrate</name>
    </ligand>
</feature>
<feature type="binding site" evidence="1">
    <location>
        <position position="32"/>
    </location>
    <ligand>
        <name>substrate</name>
    </ligand>
</feature>
<feature type="binding site" evidence="1">
    <location>
        <begin position="59"/>
        <end position="68"/>
    </location>
    <ligand>
        <name>substrate</name>
    </ligand>
</feature>
<feature type="binding site" evidence="1">
    <location>
        <position position="118"/>
    </location>
    <ligand>
        <name>substrate</name>
    </ligand>
</feature>
<feature type="binding site" evidence="1">
    <location>
        <position position="180"/>
    </location>
    <ligand>
        <name>substrate</name>
    </ligand>
</feature>
<feature type="binding site" evidence="1">
    <location>
        <position position="189"/>
    </location>
    <ligand>
        <name>substrate</name>
    </ligand>
</feature>
<feature type="binding site" evidence="1">
    <location>
        <position position="209"/>
    </location>
    <ligand>
        <name>substrate</name>
    </ligand>
</feature>
<feature type="binding site" evidence="1">
    <location>
        <position position="210"/>
    </location>
    <ligand>
        <name>substrate</name>
    </ligand>
</feature>
<protein>
    <recommendedName>
        <fullName evidence="1">Orotidine 5'-phosphate decarboxylase</fullName>
        <ecNumber evidence="1">4.1.1.23</ecNumber>
    </recommendedName>
    <alternativeName>
        <fullName evidence="1">OMP decarboxylase</fullName>
        <shortName evidence="1">OMPDCase</shortName>
        <shortName evidence="1">OMPdecase</shortName>
    </alternativeName>
</protein>
<comment type="function">
    <text evidence="1">Catalyzes the decarboxylation of orotidine 5'-monophosphate (OMP) to uridine 5'-monophosphate (UMP).</text>
</comment>
<comment type="catalytic activity">
    <reaction evidence="1">
        <text>orotidine 5'-phosphate + H(+) = UMP + CO2</text>
        <dbReference type="Rhea" id="RHEA:11596"/>
        <dbReference type="ChEBI" id="CHEBI:15378"/>
        <dbReference type="ChEBI" id="CHEBI:16526"/>
        <dbReference type="ChEBI" id="CHEBI:57538"/>
        <dbReference type="ChEBI" id="CHEBI:57865"/>
        <dbReference type="EC" id="4.1.1.23"/>
    </reaction>
</comment>
<comment type="pathway">
    <text evidence="1">Pyrimidine metabolism; UMP biosynthesis via de novo pathway; UMP from orotate: step 2/2.</text>
</comment>
<comment type="subunit">
    <text evidence="1">Homodimer.</text>
</comment>
<comment type="similarity">
    <text evidence="1">Belongs to the OMP decarboxylase family. Type 1 subfamily.</text>
</comment>
<proteinExistence type="inferred from homology"/>
<organism>
    <name type="scientific">Synechocystis sp. (strain ATCC 27184 / PCC 6803 / Kazusa)</name>
    <dbReference type="NCBI Taxonomy" id="1111708"/>
    <lineage>
        <taxon>Bacteria</taxon>
        <taxon>Bacillati</taxon>
        <taxon>Cyanobacteriota</taxon>
        <taxon>Cyanophyceae</taxon>
        <taxon>Synechococcales</taxon>
        <taxon>Merismopediaceae</taxon>
        <taxon>Synechocystis</taxon>
    </lineage>
</organism>
<evidence type="ECO:0000255" key="1">
    <source>
        <dbReference type="HAMAP-Rule" id="MF_01200"/>
    </source>
</evidence>
<keyword id="KW-0210">Decarboxylase</keyword>
<keyword id="KW-0456">Lyase</keyword>
<keyword id="KW-0665">Pyrimidine biosynthesis</keyword>
<keyword id="KW-1185">Reference proteome</keyword>
<sequence>MTPDQVIVALDVPDLPKAIALVDRLPGVGFWKVGLELFVGAGPVILAELKDRGKRIFLDLKFHDIPNTMLGACLSASRYEVDLLTLHATAGSQALTLAAQAMAPLPHPPKLLAITLLTSIGDRQLREELQQPLAVDDYVNAMARLARNAGIDGAVCSPQEVAKLRQTCGPEFLLVTPGVRPLWSAPGDQQRVMIPAQAIAAGANYVVIGRPITADPSPEAAWERLCQDLAV</sequence>
<accession>P73761</accession>
<gene>
    <name evidence="1" type="primary">pyrF</name>
    <name type="ordered locus">sll0838</name>
</gene>
<dbReference type="EC" id="4.1.1.23" evidence="1"/>
<dbReference type="EMBL" id="BA000022">
    <property type="protein sequence ID" value="BAA17813.1"/>
    <property type="molecule type" value="Genomic_DNA"/>
</dbReference>
<dbReference type="PIR" id="S74852">
    <property type="entry name" value="S74852"/>
</dbReference>
<dbReference type="SMR" id="P73761"/>
<dbReference type="FunCoup" id="P73761">
    <property type="interactions" value="176"/>
</dbReference>
<dbReference type="STRING" id="1148.gene:10498681"/>
<dbReference type="PaxDb" id="1148-1652895"/>
<dbReference type="EnsemblBacteria" id="BAA17813">
    <property type="protein sequence ID" value="BAA17813"/>
    <property type="gene ID" value="BAA17813"/>
</dbReference>
<dbReference type="KEGG" id="syn:sll0838"/>
<dbReference type="eggNOG" id="COG0284">
    <property type="taxonomic scope" value="Bacteria"/>
</dbReference>
<dbReference type="InParanoid" id="P73761"/>
<dbReference type="PhylomeDB" id="P73761"/>
<dbReference type="UniPathway" id="UPA00070">
    <property type="reaction ID" value="UER00120"/>
</dbReference>
<dbReference type="Proteomes" id="UP000001425">
    <property type="component" value="Chromosome"/>
</dbReference>
<dbReference type="GO" id="GO:0005829">
    <property type="term" value="C:cytosol"/>
    <property type="evidence" value="ECO:0000318"/>
    <property type="project" value="GO_Central"/>
</dbReference>
<dbReference type="GO" id="GO:0004590">
    <property type="term" value="F:orotidine-5'-phosphate decarboxylase activity"/>
    <property type="evidence" value="ECO:0000318"/>
    <property type="project" value="GO_Central"/>
</dbReference>
<dbReference type="GO" id="GO:0006207">
    <property type="term" value="P:'de novo' pyrimidine nucleobase biosynthetic process"/>
    <property type="evidence" value="ECO:0000318"/>
    <property type="project" value="GO_Central"/>
</dbReference>
<dbReference type="GO" id="GO:0044205">
    <property type="term" value="P:'de novo' UMP biosynthetic process"/>
    <property type="evidence" value="ECO:0007669"/>
    <property type="project" value="UniProtKB-UniRule"/>
</dbReference>
<dbReference type="CDD" id="cd04725">
    <property type="entry name" value="OMP_decarboxylase_like"/>
    <property type="match status" value="1"/>
</dbReference>
<dbReference type="FunFam" id="3.20.20.70:FF:000015">
    <property type="entry name" value="Orotidine 5'-phosphate decarboxylase"/>
    <property type="match status" value="1"/>
</dbReference>
<dbReference type="Gene3D" id="3.20.20.70">
    <property type="entry name" value="Aldolase class I"/>
    <property type="match status" value="1"/>
</dbReference>
<dbReference type="HAMAP" id="MF_01200_B">
    <property type="entry name" value="OMPdecase_type1_B"/>
    <property type="match status" value="1"/>
</dbReference>
<dbReference type="InterPro" id="IPR013785">
    <property type="entry name" value="Aldolase_TIM"/>
</dbReference>
<dbReference type="InterPro" id="IPR014732">
    <property type="entry name" value="OMPdecase"/>
</dbReference>
<dbReference type="InterPro" id="IPR018089">
    <property type="entry name" value="OMPdecase_AS"/>
</dbReference>
<dbReference type="InterPro" id="IPR047596">
    <property type="entry name" value="OMPdecase_bac"/>
</dbReference>
<dbReference type="InterPro" id="IPR001754">
    <property type="entry name" value="OMPdeCOase_dom"/>
</dbReference>
<dbReference type="InterPro" id="IPR011060">
    <property type="entry name" value="RibuloseP-bd_barrel"/>
</dbReference>
<dbReference type="NCBIfam" id="NF001273">
    <property type="entry name" value="PRK00230.1"/>
    <property type="match status" value="1"/>
</dbReference>
<dbReference type="NCBIfam" id="TIGR01740">
    <property type="entry name" value="pyrF"/>
    <property type="match status" value="1"/>
</dbReference>
<dbReference type="PANTHER" id="PTHR32119">
    <property type="entry name" value="OROTIDINE 5'-PHOSPHATE DECARBOXYLASE"/>
    <property type="match status" value="1"/>
</dbReference>
<dbReference type="PANTHER" id="PTHR32119:SF2">
    <property type="entry name" value="OROTIDINE 5'-PHOSPHATE DECARBOXYLASE"/>
    <property type="match status" value="1"/>
</dbReference>
<dbReference type="Pfam" id="PF00215">
    <property type="entry name" value="OMPdecase"/>
    <property type="match status" value="1"/>
</dbReference>
<dbReference type="SMART" id="SM00934">
    <property type="entry name" value="OMPdecase"/>
    <property type="match status" value="1"/>
</dbReference>
<dbReference type="SUPFAM" id="SSF51366">
    <property type="entry name" value="Ribulose-phoshate binding barrel"/>
    <property type="match status" value="1"/>
</dbReference>
<dbReference type="PROSITE" id="PS00156">
    <property type="entry name" value="OMPDECASE"/>
    <property type="match status" value="1"/>
</dbReference>
<name>PYRF_SYNY3</name>